<keyword id="KW-1185">Reference proteome</keyword>
<keyword id="KW-0687">Ribonucleoprotein</keyword>
<keyword id="KW-0689">Ribosomal protein</keyword>
<proteinExistence type="inferred from homology"/>
<gene>
    <name evidence="1" type="primary">rpsJ</name>
    <name type="ordered locus">ABC0149</name>
</gene>
<sequence>MAKQKIRIRLKAYDHRVLDQSAEKIVETAKRSGASVSGPIPLPTEKSVYTILRAVHKYKDSREQFEMRTHKRLIDIINPTPQTVDALMRLDLPSGVDIEIKL</sequence>
<organism>
    <name type="scientific">Shouchella clausii (strain KSM-K16)</name>
    <name type="common">Alkalihalobacillus clausii</name>
    <dbReference type="NCBI Taxonomy" id="66692"/>
    <lineage>
        <taxon>Bacteria</taxon>
        <taxon>Bacillati</taxon>
        <taxon>Bacillota</taxon>
        <taxon>Bacilli</taxon>
        <taxon>Bacillales</taxon>
        <taxon>Bacillaceae</taxon>
        <taxon>Shouchella</taxon>
    </lineage>
</organism>
<evidence type="ECO:0000255" key="1">
    <source>
        <dbReference type="HAMAP-Rule" id="MF_00508"/>
    </source>
</evidence>
<evidence type="ECO:0000305" key="2"/>
<accession>Q5WLR3</accession>
<name>RS10_SHOC1</name>
<reference key="1">
    <citation type="submission" date="2003-10" db="EMBL/GenBank/DDBJ databases">
        <title>The complete genome sequence of the alkaliphilic Bacillus clausii KSM-K16.</title>
        <authorList>
            <person name="Takaki Y."/>
            <person name="Kageyama Y."/>
            <person name="Shimamura S."/>
            <person name="Suzuki H."/>
            <person name="Nishi S."/>
            <person name="Hatada Y."/>
            <person name="Kawai S."/>
            <person name="Ito S."/>
            <person name="Horikoshi K."/>
        </authorList>
    </citation>
    <scope>NUCLEOTIDE SEQUENCE [LARGE SCALE GENOMIC DNA]</scope>
    <source>
        <strain>KSM-K16</strain>
    </source>
</reference>
<protein>
    <recommendedName>
        <fullName evidence="1">Small ribosomal subunit protein uS10</fullName>
    </recommendedName>
    <alternativeName>
        <fullName evidence="2">30S ribosomal protein S10</fullName>
    </alternativeName>
</protein>
<feature type="chain" id="PRO_0000237014" description="Small ribosomal subunit protein uS10">
    <location>
        <begin position="1"/>
        <end position="102"/>
    </location>
</feature>
<comment type="function">
    <text evidence="1">Involved in the binding of tRNA to the ribosomes.</text>
</comment>
<comment type="subunit">
    <text evidence="1">Part of the 30S ribosomal subunit.</text>
</comment>
<comment type="similarity">
    <text evidence="1">Belongs to the universal ribosomal protein uS10 family.</text>
</comment>
<dbReference type="EMBL" id="AP006627">
    <property type="protein sequence ID" value="BAD62692.1"/>
    <property type="molecule type" value="Genomic_DNA"/>
</dbReference>
<dbReference type="RefSeq" id="WP_011245013.1">
    <property type="nucleotide sequence ID" value="NC_006582.1"/>
</dbReference>
<dbReference type="SMR" id="Q5WLR3"/>
<dbReference type="STRING" id="66692.ABC0149"/>
<dbReference type="GeneID" id="86924185"/>
<dbReference type="KEGG" id="bcl:ABC0149"/>
<dbReference type="eggNOG" id="COG0051">
    <property type="taxonomic scope" value="Bacteria"/>
</dbReference>
<dbReference type="HOGENOM" id="CLU_122625_1_3_9"/>
<dbReference type="OrthoDB" id="9804464at2"/>
<dbReference type="Proteomes" id="UP000001168">
    <property type="component" value="Chromosome"/>
</dbReference>
<dbReference type="GO" id="GO:1990904">
    <property type="term" value="C:ribonucleoprotein complex"/>
    <property type="evidence" value="ECO:0007669"/>
    <property type="project" value="UniProtKB-KW"/>
</dbReference>
<dbReference type="GO" id="GO:0005840">
    <property type="term" value="C:ribosome"/>
    <property type="evidence" value="ECO:0007669"/>
    <property type="project" value="UniProtKB-KW"/>
</dbReference>
<dbReference type="GO" id="GO:0003735">
    <property type="term" value="F:structural constituent of ribosome"/>
    <property type="evidence" value="ECO:0007669"/>
    <property type="project" value="InterPro"/>
</dbReference>
<dbReference type="GO" id="GO:0000049">
    <property type="term" value="F:tRNA binding"/>
    <property type="evidence" value="ECO:0007669"/>
    <property type="project" value="UniProtKB-UniRule"/>
</dbReference>
<dbReference type="GO" id="GO:0006412">
    <property type="term" value="P:translation"/>
    <property type="evidence" value="ECO:0007669"/>
    <property type="project" value="UniProtKB-UniRule"/>
</dbReference>
<dbReference type="FunFam" id="3.30.70.600:FF:000001">
    <property type="entry name" value="30S ribosomal protein S10"/>
    <property type="match status" value="1"/>
</dbReference>
<dbReference type="Gene3D" id="3.30.70.600">
    <property type="entry name" value="Ribosomal protein S10 domain"/>
    <property type="match status" value="1"/>
</dbReference>
<dbReference type="HAMAP" id="MF_00508">
    <property type="entry name" value="Ribosomal_uS10"/>
    <property type="match status" value="1"/>
</dbReference>
<dbReference type="InterPro" id="IPR001848">
    <property type="entry name" value="Ribosomal_uS10"/>
</dbReference>
<dbReference type="InterPro" id="IPR018268">
    <property type="entry name" value="Ribosomal_uS10_CS"/>
</dbReference>
<dbReference type="InterPro" id="IPR027486">
    <property type="entry name" value="Ribosomal_uS10_dom"/>
</dbReference>
<dbReference type="InterPro" id="IPR036838">
    <property type="entry name" value="Ribosomal_uS10_dom_sf"/>
</dbReference>
<dbReference type="NCBIfam" id="NF001861">
    <property type="entry name" value="PRK00596.1"/>
    <property type="match status" value="1"/>
</dbReference>
<dbReference type="NCBIfam" id="TIGR01049">
    <property type="entry name" value="rpsJ_bact"/>
    <property type="match status" value="1"/>
</dbReference>
<dbReference type="PANTHER" id="PTHR11700">
    <property type="entry name" value="30S RIBOSOMAL PROTEIN S10 FAMILY MEMBER"/>
    <property type="match status" value="1"/>
</dbReference>
<dbReference type="Pfam" id="PF00338">
    <property type="entry name" value="Ribosomal_S10"/>
    <property type="match status" value="1"/>
</dbReference>
<dbReference type="PRINTS" id="PR00971">
    <property type="entry name" value="RIBOSOMALS10"/>
</dbReference>
<dbReference type="SMART" id="SM01403">
    <property type="entry name" value="Ribosomal_S10"/>
    <property type="match status" value="1"/>
</dbReference>
<dbReference type="SUPFAM" id="SSF54999">
    <property type="entry name" value="Ribosomal protein S10"/>
    <property type="match status" value="1"/>
</dbReference>
<dbReference type="PROSITE" id="PS00361">
    <property type="entry name" value="RIBOSOMAL_S10"/>
    <property type="match status" value="1"/>
</dbReference>